<sequence length="305" mass="35020">MTEPRRRWTAAEDALLWDLYQVQEKAPTGKCQKINWNEIARHIPGRTNKDCRKRYYNRFTGGLRKGSWTQEEDERLFRLVERYQYRWATIAQKMETRNADQCSKRWHHCLNPELERSPWTVDENMLLLSAVNTHGSSWKDIQKCHFPTRSANNIKNQYTILSRKNISLAPAHLHPCCDSPSPSKSSRRPPSTPTSTPQVPGSRQGSSYDPYDYGSLSSTPQLSATDYLPATPEAPAVNFDMAMGAFGDSCGYMPQYQPSPSFYANSPDGSELMMPETMGMRMRYDFRDGLEQEGVRYPGQETFGY</sequence>
<organism>
    <name type="scientific">Emericella nidulans (strain FGSC A4 / ATCC 38163 / CBS 112.46 / NRRL 194 / M139)</name>
    <name type="common">Aspergillus nidulans</name>
    <dbReference type="NCBI Taxonomy" id="227321"/>
    <lineage>
        <taxon>Eukaryota</taxon>
        <taxon>Fungi</taxon>
        <taxon>Dikarya</taxon>
        <taxon>Ascomycota</taxon>
        <taxon>Pezizomycotina</taxon>
        <taxon>Eurotiomycetes</taxon>
        <taxon>Eurotiomycetidae</taxon>
        <taxon>Eurotiales</taxon>
        <taxon>Aspergillaceae</taxon>
        <taxon>Aspergillus</taxon>
        <taxon>Aspergillus subgen. Nidulantes</taxon>
    </lineage>
</organism>
<comment type="function">
    <text evidence="3">Transcription regulator that acts as a central regulatory node for the integration of external bacterial signals leading to the regulation of secondary metabolite gene clusters such as orsellinic, lecanoric acid, cichorine, 2,4-dihydroxy-3-methyl-6-(2-oxopropyl)benzaldehyde (dba), emericellamide or microperfuranone clusters.</text>
</comment>
<comment type="subcellular location">
    <subcellularLocation>
        <location evidence="5">Nucleus</location>
    </subcellularLocation>
</comment>
<comment type="induction">
    <text evidence="3">Expression is induced during co-cultivation with Streptomyces rapamycinicus.</text>
</comment>
<comment type="disruption phenotype">
    <text evidence="3">Results in a significantly reduced expression of orsA and orsD, and in complete loss of orsellinic acid production, during response to Streptomyces rapamycinicus.</text>
</comment>
<gene>
    <name evidence="4" type="primary">basR</name>
    <name type="ORF">AN7174</name>
</gene>
<name>BASR_EMENI</name>
<proteinExistence type="evidence at transcript level"/>
<accession>A0A1U8QVN4</accession>
<accession>C8VD49</accession>
<accession>Q5AX06</accession>
<keyword id="KW-0539">Nucleus</keyword>
<keyword id="KW-1185">Reference proteome</keyword>
<keyword id="KW-0677">Repeat</keyword>
<keyword id="KW-0804">Transcription</keyword>
<keyword id="KW-0805">Transcription regulation</keyword>
<reference key="1">
    <citation type="journal article" date="2005" name="Nature">
        <title>Sequencing of Aspergillus nidulans and comparative analysis with A. fumigatus and A. oryzae.</title>
        <authorList>
            <person name="Galagan J.E."/>
            <person name="Calvo S.E."/>
            <person name="Cuomo C."/>
            <person name="Ma L.-J."/>
            <person name="Wortman J.R."/>
            <person name="Batzoglou S."/>
            <person name="Lee S.-I."/>
            <person name="Bastuerkmen M."/>
            <person name="Spevak C.C."/>
            <person name="Clutterbuck J."/>
            <person name="Kapitonov V."/>
            <person name="Jurka J."/>
            <person name="Scazzocchio C."/>
            <person name="Farman M.L."/>
            <person name="Butler J."/>
            <person name="Purcell S."/>
            <person name="Harris S."/>
            <person name="Braus G.H."/>
            <person name="Draht O."/>
            <person name="Busch S."/>
            <person name="D'Enfert C."/>
            <person name="Bouchier C."/>
            <person name="Goldman G.H."/>
            <person name="Bell-Pedersen D."/>
            <person name="Griffiths-Jones S."/>
            <person name="Doonan J.H."/>
            <person name="Yu J."/>
            <person name="Vienken K."/>
            <person name="Pain A."/>
            <person name="Freitag M."/>
            <person name="Selker E.U."/>
            <person name="Archer D.B."/>
            <person name="Penalva M.A."/>
            <person name="Oakley B.R."/>
            <person name="Momany M."/>
            <person name="Tanaka T."/>
            <person name="Kumagai T."/>
            <person name="Asai K."/>
            <person name="Machida M."/>
            <person name="Nierman W.C."/>
            <person name="Denning D.W."/>
            <person name="Caddick M.X."/>
            <person name="Hynes M."/>
            <person name="Paoletti M."/>
            <person name="Fischer R."/>
            <person name="Miller B.L."/>
            <person name="Dyer P.S."/>
            <person name="Sachs M.S."/>
            <person name="Osmani S.A."/>
            <person name="Birren B.W."/>
        </authorList>
    </citation>
    <scope>NUCLEOTIDE SEQUENCE [LARGE SCALE GENOMIC DNA]</scope>
    <source>
        <strain>FGSC A4 / ATCC 38163 / CBS 112.46 / NRRL 194 / M139</strain>
    </source>
</reference>
<reference key="2">
    <citation type="journal article" date="2009" name="Fungal Genet. Biol.">
        <title>The 2008 update of the Aspergillus nidulans genome annotation: a community effort.</title>
        <authorList>
            <person name="Wortman J.R."/>
            <person name="Gilsenan J.M."/>
            <person name="Joardar V."/>
            <person name="Deegan J."/>
            <person name="Clutterbuck J."/>
            <person name="Andersen M.R."/>
            <person name="Archer D."/>
            <person name="Bencina M."/>
            <person name="Braus G."/>
            <person name="Coutinho P."/>
            <person name="von Dohren H."/>
            <person name="Doonan J."/>
            <person name="Driessen A.J."/>
            <person name="Durek P."/>
            <person name="Espeso E."/>
            <person name="Fekete E."/>
            <person name="Flipphi M."/>
            <person name="Estrada C.G."/>
            <person name="Geysens S."/>
            <person name="Goldman G."/>
            <person name="de Groot P.W."/>
            <person name="Hansen K."/>
            <person name="Harris S.D."/>
            <person name="Heinekamp T."/>
            <person name="Helmstaedt K."/>
            <person name="Henrissat B."/>
            <person name="Hofmann G."/>
            <person name="Homan T."/>
            <person name="Horio T."/>
            <person name="Horiuchi H."/>
            <person name="James S."/>
            <person name="Jones M."/>
            <person name="Karaffa L."/>
            <person name="Karanyi Z."/>
            <person name="Kato M."/>
            <person name="Keller N."/>
            <person name="Kelly D.E."/>
            <person name="Kiel J.A."/>
            <person name="Kim J.M."/>
            <person name="van der Klei I.J."/>
            <person name="Klis F.M."/>
            <person name="Kovalchuk A."/>
            <person name="Krasevec N."/>
            <person name="Kubicek C.P."/>
            <person name="Liu B."/>
            <person name="Maccabe A."/>
            <person name="Meyer V."/>
            <person name="Mirabito P."/>
            <person name="Miskei M."/>
            <person name="Mos M."/>
            <person name="Mullins J."/>
            <person name="Nelson D.R."/>
            <person name="Nielsen J."/>
            <person name="Oakley B.R."/>
            <person name="Osmani S.A."/>
            <person name="Pakula T."/>
            <person name="Paszewski A."/>
            <person name="Paulsen I."/>
            <person name="Pilsyk S."/>
            <person name="Pocsi I."/>
            <person name="Punt P.J."/>
            <person name="Ram A.F."/>
            <person name="Ren Q."/>
            <person name="Robellet X."/>
            <person name="Robson G."/>
            <person name="Seiboth B."/>
            <person name="van Solingen P."/>
            <person name="Specht T."/>
            <person name="Sun J."/>
            <person name="Taheri-Talesh N."/>
            <person name="Takeshita N."/>
            <person name="Ussery D."/>
            <person name="vanKuyk P.A."/>
            <person name="Visser H."/>
            <person name="van de Vondervoort P.J."/>
            <person name="de Vries R.P."/>
            <person name="Walton J."/>
            <person name="Xiang X."/>
            <person name="Xiong Y."/>
            <person name="Zeng A.P."/>
            <person name="Brandt B.W."/>
            <person name="Cornell M.J."/>
            <person name="van den Hondel C.A."/>
            <person name="Visser J."/>
            <person name="Oliver S.G."/>
            <person name="Turner G."/>
        </authorList>
    </citation>
    <scope>GENOME REANNOTATION</scope>
    <source>
        <strain>FGSC A4 / ATCC 38163 / CBS 112.46 / NRRL 194 / M139</strain>
    </source>
</reference>
<reference key="3">
    <citation type="journal article" date="2018" name="Elife">
        <title>Chromatin mapping identifies BasR, a key regulator of bacteria-triggered production of fungal secondary metabolites.</title>
        <authorList>
            <person name="Fischer J."/>
            <person name="Mueller S.Y."/>
            <person name="Netzker T."/>
            <person name="Jaeger N."/>
            <person name="Gacek-Matthews A."/>
            <person name="Scherlach K."/>
            <person name="Stroe M.C."/>
            <person name="Garcia-Altares M."/>
            <person name="Pezzini F."/>
            <person name="Schoeler H."/>
            <person name="Reichelt M."/>
            <person name="Gershenzon J."/>
            <person name="Krespach M.K."/>
            <person name="Shelest E."/>
            <person name="Schroeckh V."/>
            <person name="Valiante V."/>
            <person name="Heinzel T."/>
            <person name="Hertweck C."/>
            <person name="Strauss J."/>
            <person name="Brakhage A.A."/>
        </authorList>
    </citation>
    <scope>FUNCTION</scope>
    <scope>DISRUPTION PHENOTYPE</scope>
    <scope>INDUCTION</scope>
</reference>
<protein>
    <recommendedName>
        <fullName evidence="4">Myb-like transcriptional regulator basR</fullName>
    </recommendedName>
</protein>
<dbReference type="EMBL" id="BN001304">
    <property type="protein sequence ID" value="CBF78928.1"/>
    <property type="molecule type" value="Genomic_DNA"/>
</dbReference>
<dbReference type="EMBL" id="AACD01000122">
    <property type="protein sequence ID" value="EAA61426.1"/>
    <property type="molecule type" value="Genomic_DNA"/>
</dbReference>
<dbReference type="RefSeq" id="XP_664778.1">
    <property type="nucleotide sequence ID" value="XM_659686.1"/>
</dbReference>
<dbReference type="SMR" id="A0A1U8QVN4"/>
<dbReference type="EnsemblFungi" id="CBF78928">
    <property type="protein sequence ID" value="CBF78928"/>
    <property type="gene ID" value="ANIA_07174"/>
</dbReference>
<dbReference type="KEGG" id="ani:ANIA_07174"/>
<dbReference type="VEuPathDB" id="FungiDB:AN7174"/>
<dbReference type="eggNOG" id="KOG0048">
    <property type="taxonomic scope" value="Eukaryota"/>
</dbReference>
<dbReference type="HOGENOM" id="CLU_912241_0_0_1"/>
<dbReference type="InParanoid" id="A0A1U8QVN4"/>
<dbReference type="OMA" id="NTKNDSM"/>
<dbReference type="OrthoDB" id="2143914at2759"/>
<dbReference type="Proteomes" id="UP000000560">
    <property type="component" value="Chromosome IV"/>
</dbReference>
<dbReference type="GO" id="GO:0005634">
    <property type="term" value="C:nucleus"/>
    <property type="evidence" value="ECO:0000318"/>
    <property type="project" value="GO_Central"/>
</dbReference>
<dbReference type="GO" id="GO:0000981">
    <property type="term" value="F:DNA-binding transcription factor activity, RNA polymerase II-specific"/>
    <property type="evidence" value="ECO:0000318"/>
    <property type="project" value="GO_Central"/>
</dbReference>
<dbReference type="GO" id="GO:0000978">
    <property type="term" value="F:RNA polymerase II cis-regulatory region sequence-specific DNA binding"/>
    <property type="evidence" value="ECO:0000318"/>
    <property type="project" value="GO_Central"/>
</dbReference>
<dbReference type="GO" id="GO:0000278">
    <property type="term" value="P:mitotic cell cycle"/>
    <property type="evidence" value="ECO:0000318"/>
    <property type="project" value="GO_Central"/>
</dbReference>
<dbReference type="GO" id="GO:0045944">
    <property type="term" value="P:positive regulation of transcription by RNA polymerase II"/>
    <property type="evidence" value="ECO:0000318"/>
    <property type="project" value="GO_Central"/>
</dbReference>
<dbReference type="CDD" id="cd00167">
    <property type="entry name" value="SANT"/>
    <property type="match status" value="3"/>
</dbReference>
<dbReference type="FunFam" id="1.10.10.60:FF:000640">
    <property type="entry name" value="Putative Myb-like transcription factor"/>
    <property type="match status" value="1"/>
</dbReference>
<dbReference type="FunFam" id="1.10.10.60:FF:000016">
    <property type="entry name" value="Transcriptional activator Myb isoform A"/>
    <property type="match status" value="1"/>
</dbReference>
<dbReference type="Gene3D" id="1.10.10.60">
    <property type="entry name" value="Homeodomain-like"/>
    <property type="match status" value="3"/>
</dbReference>
<dbReference type="InterPro" id="IPR009057">
    <property type="entry name" value="Homeodomain-like_sf"/>
</dbReference>
<dbReference type="InterPro" id="IPR017930">
    <property type="entry name" value="Myb_dom"/>
</dbReference>
<dbReference type="InterPro" id="IPR050560">
    <property type="entry name" value="MYB_TF"/>
</dbReference>
<dbReference type="InterPro" id="IPR001005">
    <property type="entry name" value="SANT/Myb"/>
</dbReference>
<dbReference type="PANTHER" id="PTHR45614">
    <property type="entry name" value="MYB PROTEIN-RELATED"/>
    <property type="match status" value="1"/>
</dbReference>
<dbReference type="PANTHER" id="PTHR45614:SF51">
    <property type="entry name" value="MYB-LIKE DNA-BINDING PROTEIN BAS1"/>
    <property type="match status" value="1"/>
</dbReference>
<dbReference type="Pfam" id="PF13921">
    <property type="entry name" value="Myb_DNA-bind_6"/>
    <property type="match status" value="1"/>
</dbReference>
<dbReference type="Pfam" id="PF00249">
    <property type="entry name" value="Myb_DNA-binding"/>
    <property type="match status" value="1"/>
</dbReference>
<dbReference type="SMART" id="SM00717">
    <property type="entry name" value="SANT"/>
    <property type="match status" value="3"/>
</dbReference>
<dbReference type="SUPFAM" id="SSF46689">
    <property type="entry name" value="Homeodomain-like"/>
    <property type="match status" value="2"/>
</dbReference>
<dbReference type="PROSITE" id="PS51294">
    <property type="entry name" value="HTH_MYB"/>
    <property type="match status" value="1"/>
</dbReference>
<dbReference type="PROSITE" id="PS50090">
    <property type="entry name" value="MYB_LIKE"/>
    <property type="match status" value="1"/>
</dbReference>
<feature type="chain" id="PRO_0000454890" description="Myb-like transcriptional regulator basR">
    <location>
        <begin position="1"/>
        <end position="305"/>
    </location>
</feature>
<feature type="domain" description="Myb-like 1" evidence="1">
    <location>
        <begin position="5"/>
        <end position="59"/>
    </location>
</feature>
<feature type="domain" description="Myb-like 2" evidence="1">
    <location>
        <begin position="60"/>
        <end position="110"/>
    </location>
</feature>
<feature type="domain" description="Myb-like 3" evidence="1">
    <location>
        <begin position="111"/>
        <end position="162"/>
    </location>
</feature>
<feature type="region of interest" description="Disordered" evidence="2">
    <location>
        <begin position="175"/>
        <end position="215"/>
    </location>
</feature>
<feature type="compositionally biased region" description="Polar residues" evidence="2">
    <location>
        <begin position="198"/>
        <end position="207"/>
    </location>
</feature>
<evidence type="ECO:0000255" key="1">
    <source>
        <dbReference type="PROSITE-ProRule" id="PRU00133"/>
    </source>
</evidence>
<evidence type="ECO:0000256" key="2">
    <source>
        <dbReference type="SAM" id="MobiDB-lite"/>
    </source>
</evidence>
<evidence type="ECO:0000269" key="3">
    <source>
    </source>
</evidence>
<evidence type="ECO:0000303" key="4">
    <source>
    </source>
</evidence>
<evidence type="ECO:0000305" key="5">
    <source>
    </source>
</evidence>